<proteinExistence type="inferred from homology"/>
<geneLocation type="chloroplast"/>
<accession>A0T099</accession>
<name>PSBK_PHATC</name>
<organism>
    <name type="scientific">Phaeodactylum tricornutum (strain CCAP 1055/1)</name>
    <dbReference type="NCBI Taxonomy" id="556484"/>
    <lineage>
        <taxon>Eukaryota</taxon>
        <taxon>Sar</taxon>
        <taxon>Stramenopiles</taxon>
        <taxon>Ochrophyta</taxon>
        <taxon>Bacillariophyta</taxon>
        <taxon>Bacillariophyceae</taxon>
        <taxon>Bacillariophycidae</taxon>
        <taxon>Naviculales</taxon>
        <taxon>Phaeodactylaceae</taxon>
        <taxon>Phaeodactylum</taxon>
    </lineage>
</organism>
<comment type="function">
    <text evidence="1">One of the components of the core complex of photosystem II (PSII). PSII is a light-driven water:plastoquinone oxidoreductase that uses light energy to abstract electrons from H(2)O, generating O(2) and a proton gradient subsequently used for ATP formation. It consists of a core antenna complex that captures photons, and an electron transfer chain that converts photonic excitation into a charge separation.</text>
</comment>
<comment type="subunit">
    <text evidence="1">PSII is composed of 1 copy each of membrane proteins PsbA, PsbB, PsbC, PsbD, PsbE, PsbF, PsbH, PsbI, PsbJ, PsbK, PsbL, PsbM, PsbT, PsbX, PsbY, PsbZ, Psb30/Ycf12, at least 3 peripheral proteins of the oxygen-evolving complex and a large number of cofactors. It forms dimeric complexes.</text>
</comment>
<comment type="subcellular location">
    <subcellularLocation>
        <location evidence="1">Plastid</location>
        <location evidence="1">Chloroplast thylakoid membrane</location>
        <topology evidence="1">Single-pass membrane protein</topology>
    </subcellularLocation>
</comment>
<comment type="similarity">
    <text evidence="1">Belongs to the PsbK family.</text>
</comment>
<reference key="1">
    <citation type="journal article" date="2007" name="Mol. Genet. Genomics">
        <title>Chloroplast genomes of the diatoms Phaeodactylum tricornutum and Thalassiosira pseudonana: comparison with other plastid genomes of the red lineage.</title>
        <authorList>
            <person name="Oudot-Le Secq M.-P."/>
            <person name="Grimwood J."/>
            <person name="Shapiro H."/>
            <person name="Armbrust E.V."/>
            <person name="Bowler C."/>
            <person name="Green B.R."/>
        </authorList>
    </citation>
    <scope>NUCLEOTIDE SEQUENCE [LARGE SCALE GENOMIC DNA]</scope>
    <source>
        <strain>CCAP 1055/1</strain>
    </source>
</reference>
<keyword id="KW-0150">Chloroplast</keyword>
<keyword id="KW-0472">Membrane</keyword>
<keyword id="KW-0602">Photosynthesis</keyword>
<keyword id="KW-0604">Photosystem II</keyword>
<keyword id="KW-0934">Plastid</keyword>
<keyword id="KW-0674">Reaction center</keyword>
<keyword id="KW-1185">Reference proteome</keyword>
<keyword id="KW-0793">Thylakoid</keyword>
<keyword id="KW-0812">Transmembrane</keyword>
<keyword id="KW-1133">Transmembrane helix</keyword>
<sequence>METLLLSRLPEAYVVFSPIVDVLPIIPVFFLLLAFVWQAAIGFR</sequence>
<feature type="propeptide" id="PRO_0000276196" evidence="1">
    <location>
        <begin position="1"/>
        <end position="7"/>
    </location>
</feature>
<feature type="chain" id="PRO_0000276197" description="Photosystem II reaction center protein K" evidence="1">
    <location>
        <begin position="8"/>
        <end position="44"/>
    </location>
</feature>
<feature type="transmembrane region" description="Helical" evidence="1">
    <location>
        <begin position="23"/>
        <end position="43"/>
    </location>
</feature>
<protein>
    <recommendedName>
        <fullName evidence="1">Photosystem II reaction center protein K</fullName>
        <shortName evidence="1">PSII-K</shortName>
    </recommendedName>
</protein>
<evidence type="ECO:0000255" key="1">
    <source>
        <dbReference type="HAMAP-Rule" id="MF_00441"/>
    </source>
</evidence>
<dbReference type="EMBL" id="EF067920">
    <property type="protein sequence ID" value="ABK20602.1"/>
    <property type="molecule type" value="Genomic_DNA"/>
</dbReference>
<dbReference type="RefSeq" id="YP_874379.1">
    <property type="nucleotide sequence ID" value="NC_008588.1"/>
</dbReference>
<dbReference type="SMR" id="A0T099"/>
<dbReference type="STRING" id="556484.A0T099"/>
<dbReference type="GeneID" id="4524622"/>
<dbReference type="InParanoid" id="A0T099"/>
<dbReference type="Proteomes" id="UP000000759">
    <property type="component" value="Chloroplast"/>
</dbReference>
<dbReference type="GO" id="GO:0009535">
    <property type="term" value="C:chloroplast thylakoid membrane"/>
    <property type="evidence" value="ECO:0007669"/>
    <property type="project" value="UniProtKB-SubCell"/>
</dbReference>
<dbReference type="GO" id="GO:0009539">
    <property type="term" value="C:photosystem II reaction center"/>
    <property type="evidence" value="ECO:0007669"/>
    <property type="project" value="InterPro"/>
</dbReference>
<dbReference type="GO" id="GO:0015979">
    <property type="term" value="P:photosynthesis"/>
    <property type="evidence" value="ECO:0007669"/>
    <property type="project" value="UniProtKB-UniRule"/>
</dbReference>
<dbReference type="HAMAP" id="MF_00441">
    <property type="entry name" value="PSII_PsbK"/>
    <property type="match status" value="1"/>
</dbReference>
<dbReference type="InterPro" id="IPR003687">
    <property type="entry name" value="PSII_PsbK"/>
</dbReference>
<dbReference type="InterPro" id="IPR037270">
    <property type="entry name" value="PSII_PsbK_sf"/>
</dbReference>
<dbReference type="NCBIfam" id="NF002715">
    <property type="entry name" value="PRK02553.1"/>
    <property type="match status" value="1"/>
</dbReference>
<dbReference type="PANTHER" id="PTHR35325">
    <property type="match status" value="1"/>
</dbReference>
<dbReference type="PANTHER" id="PTHR35325:SF1">
    <property type="entry name" value="PHOTOSYSTEM II REACTION CENTER PROTEIN K"/>
    <property type="match status" value="1"/>
</dbReference>
<dbReference type="Pfam" id="PF02533">
    <property type="entry name" value="PsbK"/>
    <property type="match status" value="1"/>
</dbReference>
<dbReference type="SUPFAM" id="SSF161037">
    <property type="entry name" value="Photosystem II reaction center protein K, PsbK"/>
    <property type="match status" value="1"/>
</dbReference>
<gene>
    <name evidence="1" type="primary">psbK</name>
</gene>